<organism>
    <name type="scientific">Paracoccus denitrificans (strain Pd 1222)</name>
    <dbReference type="NCBI Taxonomy" id="318586"/>
    <lineage>
        <taxon>Bacteria</taxon>
        <taxon>Pseudomonadati</taxon>
        <taxon>Pseudomonadota</taxon>
        <taxon>Alphaproteobacteria</taxon>
        <taxon>Rhodobacterales</taxon>
        <taxon>Paracoccaceae</taxon>
        <taxon>Paracoccus</taxon>
    </lineage>
</organism>
<name>RL7_PARDP</name>
<feature type="chain" id="PRO_1000007051" description="Large ribosomal subunit protein bL12">
    <location>
        <begin position="1"/>
        <end position="124"/>
    </location>
</feature>
<sequence>MADLKKLAEEIVGLTLLEAQELKNILKDEYGIEPAAGGAVMVAGPAAGPAEAAEEKTEFDVVLVDAGANKINVIKEVRGITGLGLKEAKDLVEAGGKVKEGASKADAEEMKKKLEAAGAKVELK</sequence>
<comment type="function">
    <text evidence="1">Forms part of the ribosomal stalk which helps the ribosome interact with GTP-bound translation factors. Is thus essential for accurate translation.</text>
</comment>
<comment type="subunit">
    <text evidence="1">Homodimer. Part of the ribosomal stalk of the 50S ribosomal subunit. Forms a multimeric L10(L12)X complex, where L10 forms an elongated spine to which 2 to 4 L12 dimers bind in a sequential fashion. Binds GTP-bound translation factors.</text>
</comment>
<comment type="similarity">
    <text evidence="1">Belongs to the bacterial ribosomal protein bL12 family.</text>
</comment>
<accession>A1B014</accession>
<keyword id="KW-1185">Reference proteome</keyword>
<keyword id="KW-0687">Ribonucleoprotein</keyword>
<keyword id="KW-0689">Ribosomal protein</keyword>
<reference key="1">
    <citation type="submission" date="2006-12" db="EMBL/GenBank/DDBJ databases">
        <title>Complete sequence of chromosome 1 of Paracoccus denitrificans PD1222.</title>
        <authorList>
            <person name="Copeland A."/>
            <person name="Lucas S."/>
            <person name="Lapidus A."/>
            <person name="Barry K."/>
            <person name="Detter J.C."/>
            <person name="Glavina del Rio T."/>
            <person name="Hammon N."/>
            <person name="Israni S."/>
            <person name="Dalin E."/>
            <person name="Tice H."/>
            <person name="Pitluck S."/>
            <person name="Munk A.C."/>
            <person name="Brettin T."/>
            <person name="Bruce D."/>
            <person name="Han C."/>
            <person name="Tapia R."/>
            <person name="Gilna P."/>
            <person name="Schmutz J."/>
            <person name="Larimer F."/>
            <person name="Land M."/>
            <person name="Hauser L."/>
            <person name="Kyrpides N."/>
            <person name="Lykidis A."/>
            <person name="Spiro S."/>
            <person name="Richardson D.J."/>
            <person name="Moir J.W.B."/>
            <person name="Ferguson S.J."/>
            <person name="van Spanning R.J.M."/>
            <person name="Richardson P."/>
        </authorList>
    </citation>
    <scope>NUCLEOTIDE SEQUENCE [LARGE SCALE GENOMIC DNA]</scope>
    <source>
        <strain>Pd 1222</strain>
    </source>
</reference>
<gene>
    <name evidence="1" type="primary">rplL</name>
    <name type="ordered locus">Pden_0746</name>
</gene>
<protein>
    <recommendedName>
        <fullName evidence="1">Large ribosomal subunit protein bL12</fullName>
    </recommendedName>
    <alternativeName>
        <fullName evidence="2">50S ribosomal protein L7/L12</fullName>
    </alternativeName>
</protein>
<evidence type="ECO:0000255" key="1">
    <source>
        <dbReference type="HAMAP-Rule" id="MF_00368"/>
    </source>
</evidence>
<evidence type="ECO:0000305" key="2"/>
<dbReference type="EMBL" id="CP000489">
    <property type="protein sequence ID" value="ABL68858.1"/>
    <property type="molecule type" value="Genomic_DNA"/>
</dbReference>
<dbReference type="RefSeq" id="WP_011747091.1">
    <property type="nucleotide sequence ID" value="NC_008686.1"/>
</dbReference>
<dbReference type="SMR" id="A1B014"/>
<dbReference type="STRING" id="318586.Pden_0746"/>
<dbReference type="EnsemblBacteria" id="ABL68858">
    <property type="protein sequence ID" value="ABL68858"/>
    <property type="gene ID" value="Pden_0746"/>
</dbReference>
<dbReference type="GeneID" id="93451970"/>
<dbReference type="KEGG" id="pde:Pden_0746"/>
<dbReference type="eggNOG" id="COG0222">
    <property type="taxonomic scope" value="Bacteria"/>
</dbReference>
<dbReference type="HOGENOM" id="CLU_086499_3_0_5"/>
<dbReference type="OrthoDB" id="9811748at2"/>
<dbReference type="Proteomes" id="UP000000361">
    <property type="component" value="Chromosome 1"/>
</dbReference>
<dbReference type="GO" id="GO:0022625">
    <property type="term" value="C:cytosolic large ribosomal subunit"/>
    <property type="evidence" value="ECO:0007669"/>
    <property type="project" value="TreeGrafter"/>
</dbReference>
<dbReference type="GO" id="GO:0003729">
    <property type="term" value="F:mRNA binding"/>
    <property type="evidence" value="ECO:0007669"/>
    <property type="project" value="TreeGrafter"/>
</dbReference>
<dbReference type="GO" id="GO:0003735">
    <property type="term" value="F:structural constituent of ribosome"/>
    <property type="evidence" value="ECO:0007669"/>
    <property type="project" value="InterPro"/>
</dbReference>
<dbReference type="GO" id="GO:0006412">
    <property type="term" value="P:translation"/>
    <property type="evidence" value="ECO:0007669"/>
    <property type="project" value="UniProtKB-UniRule"/>
</dbReference>
<dbReference type="CDD" id="cd00387">
    <property type="entry name" value="Ribosomal_L7_L12"/>
    <property type="match status" value="1"/>
</dbReference>
<dbReference type="FunFam" id="3.30.1390.10:FF:000001">
    <property type="entry name" value="50S ribosomal protein L7/L12"/>
    <property type="match status" value="1"/>
</dbReference>
<dbReference type="Gene3D" id="3.30.1390.10">
    <property type="match status" value="1"/>
</dbReference>
<dbReference type="Gene3D" id="1.20.5.710">
    <property type="entry name" value="Single helix bin"/>
    <property type="match status" value="1"/>
</dbReference>
<dbReference type="HAMAP" id="MF_00368">
    <property type="entry name" value="Ribosomal_bL12"/>
    <property type="match status" value="1"/>
</dbReference>
<dbReference type="InterPro" id="IPR000206">
    <property type="entry name" value="Ribosomal_bL12"/>
</dbReference>
<dbReference type="InterPro" id="IPR013823">
    <property type="entry name" value="Ribosomal_bL12_C"/>
</dbReference>
<dbReference type="InterPro" id="IPR014719">
    <property type="entry name" value="Ribosomal_bL12_C/ClpS-like"/>
</dbReference>
<dbReference type="InterPro" id="IPR008932">
    <property type="entry name" value="Ribosomal_bL12_oligo"/>
</dbReference>
<dbReference type="InterPro" id="IPR036235">
    <property type="entry name" value="Ribosomal_bL12_oligo_N_sf"/>
</dbReference>
<dbReference type="NCBIfam" id="TIGR00855">
    <property type="entry name" value="L12"/>
    <property type="match status" value="1"/>
</dbReference>
<dbReference type="PANTHER" id="PTHR45987">
    <property type="entry name" value="39S RIBOSOMAL PROTEIN L12"/>
    <property type="match status" value="1"/>
</dbReference>
<dbReference type="PANTHER" id="PTHR45987:SF4">
    <property type="entry name" value="LARGE RIBOSOMAL SUBUNIT PROTEIN BL12M"/>
    <property type="match status" value="1"/>
</dbReference>
<dbReference type="Pfam" id="PF00542">
    <property type="entry name" value="Ribosomal_L12"/>
    <property type="match status" value="1"/>
</dbReference>
<dbReference type="Pfam" id="PF16320">
    <property type="entry name" value="Ribosomal_L12_N"/>
    <property type="match status" value="1"/>
</dbReference>
<dbReference type="SUPFAM" id="SSF54736">
    <property type="entry name" value="ClpS-like"/>
    <property type="match status" value="1"/>
</dbReference>
<dbReference type="SUPFAM" id="SSF48300">
    <property type="entry name" value="Ribosomal protein L7/12, oligomerisation (N-terminal) domain"/>
    <property type="match status" value="1"/>
</dbReference>
<proteinExistence type="inferred from homology"/>